<reference key="1">
    <citation type="journal article" date="2005" name="Science">
        <title>The transcriptional landscape of the mammalian genome.</title>
        <authorList>
            <person name="Carninci P."/>
            <person name="Kasukawa T."/>
            <person name="Katayama S."/>
            <person name="Gough J."/>
            <person name="Frith M.C."/>
            <person name="Maeda N."/>
            <person name="Oyama R."/>
            <person name="Ravasi T."/>
            <person name="Lenhard B."/>
            <person name="Wells C."/>
            <person name="Kodzius R."/>
            <person name="Shimokawa K."/>
            <person name="Bajic V.B."/>
            <person name="Brenner S.E."/>
            <person name="Batalov S."/>
            <person name="Forrest A.R."/>
            <person name="Zavolan M."/>
            <person name="Davis M.J."/>
            <person name="Wilming L.G."/>
            <person name="Aidinis V."/>
            <person name="Allen J.E."/>
            <person name="Ambesi-Impiombato A."/>
            <person name="Apweiler R."/>
            <person name="Aturaliya R.N."/>
            <person name="Bailey T.L."/>
            <person name="Bansal M."/>
            <person name="Baxter L."/>
            <person name="Beisel K.W."/>
            <person name="Bersano T."/>
            <person name="Bono H."/>
            <person name="Chalk A.M."/>
            <person name="Chiu K.P."/>
            <person name="Choudhary V."/>
            <person name="Christoffels A."/>
            <person name="Clutterbuck D.R."/>
            <person name="Crowe M.L."/>
            <person name="Dalla E."/>
            <person name="Dalrymple B.P."/>
            <person name="de Bono B."/>
            <person name="Della Gatta G."/>
            <person name="di Bernardo D."/>
            <person name="Down T."/>
            <person name="Engstrom P."/>
            <person name="Fagiolini M."/>
            <person name="Faulkner G."/>
            <person name="Fletcher C.F."/>
            <person name="Fukushima T."/>
            <person name="Furuno M."/>
            <person name="Futaki S."/>
            <person name="Gariboldi M."/>
            <person name="Georgii-Hemming P."/>
            <person name="Gingeras T.R."/>
            <person name="Gojobori T."/>
            <person name="Green R.E."/>
            <person name="Gustincich S."/>
            <person name="Harbers M."/>
            <person name="Hayashi Y."/>
            <person name="Hensch T.K."/>
            <person name="Hirokawa N."/>
            <person name="Hill D."/>
            <person name="Huminiecki L."/>
            <person name="Iacono M."/>
            <person name="Ikeo K."/>
            <person name="Iwama A."/>
            <person name="Ishikawa T."/>
            <person name="Jakt M."/>
            <person name="Kanapin A."/>
            <person name="Katoh M."/>
            <person name="Kawasawa Y."/>
            <person name="Kelso J."/>
            <person name="Kitamura H."/>
            <person name="Kitano H."/>
            <person name="Kollias G."/>
            <person name="Krishnan S.P."/>
            <person name="Kruger A."/>
            <person name="Kummerfeld S.K."/>
            <person name="Kurochkin I.V."/>
            <person name="Lareau L.F."/>
            <person name="Lazarevic D."/>
            <person name="Lipovich L."/>
            <person name="Liu J."/>
            <person name="Liuni S."/>
            <person name="McWilliam S."/>
            <person name="Madan Babu M."/>
            <person name="Madera M."/>
            <person name="Marchionni L."/>
            <person name="Matsuda H."/>
            <person name="Matsuzawa S."/>
            <person name="Miki H."/>
            <person name="Mignone F."/>
            <person name="Miyake S."/>
            <person name="Morris K."/>
            <person name="Mottagui-Tabar S."/>
            <person name="Mulder N."/>
            <person name="Nakano N."/>
            <person name="Nakauchi H."/>
            <person name="Ng P."/>
            <person name="Nilsson R."/>
            <person name="Nishiguchi S."/>
            <person name="Nishikawa S."/>
            <person name="Nori F."/>
            <person name="Ohara O."/>
            <person name="Okazaki Y."/>
            <person name="Orlando V."/>
            <person name="Pang K.C."/>
            <person name="Pavan W.J."/>
            <person name="Pavesi G."/>
            <person name="Pesole G."/>
            <person name="Petrovsky N."/>
            <person name="Piazza S."/>
            <person name="Reed J."/>
            <person name="Reid J.F."/>
            <person name="Ring B.Z."/>
            <person name="Ringwald M."/>
            <person name="Rost B."/>
            <person name="Ruan Y."/>
            <person name="Salzberg S.L."/>
            <person name="Sandelin A."/>
            <person name="Schneider C."/>
            <person name="Schoenbach C."/>
            <person name="Sekiguchi K."/>
            <person name="Semple C.A."/>
            <person name="Seno S."/>
            <person name="Sessa L."/>
            <person name="Sheng Y."/>
            <person name="Shibata Y."/>
            <person name="Shimada H."/>
            <person name="Shimada K."/>
            <person name="Silva D."/>
            <person name="Sinclair B."/>
            <person name="Sperling S."/>
            <person name="Stupka E."/>
            <person name="Sugiura K."/>
            <person name="Sultana R."/>
            <person name="Takenaka Y."/>
            <person name="Taki K."/>
            <person name="Tammoja K."/>
            <person name="Tan S.L."/>
            <person name="Tang S."/>
            <person name="Taylor M.S."/>
            <person name="Tegner J."/>
            <person name="Teichmann S.A."/>
            <person name="Ueda H.R."/>
            <person name="van Nimwegen E."/>
            <person name="Verardo R."/>
            <person name="Wei C.L."/>
            <person name="Yagi K."/>
            <person name="Yamanishi H."/>
            <person name="Zabarovsky E."/>
            <person name="Zhu S."/>
            <person name="Zimmer A."/>
            <person name="Hide W."/>
            <person name="Bult C."/>
            <person name="Grimmond S.M."/>
            <person name="Teasdale R.D."/>
            <person name="Liu E.T."/>
            <person name="Brusic V."/>
            <person name="Quackenbush J."/>
            <person name="Wahlestedt C."/>
            <person name="Mattick J.S."/>
            <person name="Hume D.A."/>
            <person name="Kai C."/>
            <person name="Sasaki D."/>
            <person name="Tomaru Y."/>
            <person name="Fukuda S."/>
            <person name="Kanamori-Katayama M."/>
            <person name="Suzuki M."/>
            <person name="Aoki J."/>
            <person name="Arakawa T."/>
            <person name="Iida J."/>
            <person name="Imamura K."/>
            <person name="Itoh M."/>
            <person name="Kato T."/>
            <person name="Kawaji H."/>
            <person name="Kawagashira N."/>
            <person name="Kawashima T."/>
            <person name="Kojima M."/>
            <person name="Kondo S."/>
            <person name="Konno H."/>
            <person name="Nakano K."/>
            <person name="Ninomiya N."/>
            <person name="Nishio T."/>
            <person name="Okada M."/>
            <person name="Plessy C."/>
            <person name="Shibata K."/>
            <person name="Shiraki T."/>
            <person name="Suzuki S."/>
            <person name="Tagami M."/>
            <person name="Waki K."/>
            <person name="Watahiki A."/>
            <person name="Okamura-Oho Y."/>
            <person name="Suzuki H."/>
            <person name="Kawai J."/>
            <person name="Hayashizaki Y."/>
        </authorList>
    </citation>
    <scope>NUCLEOTIDE SEQUENCE [LARGE SCALE MRNA] (ISOFORMS 1 AND 2)</scope>
    <source>
        <strain>C57BL/6J</strain>
        <tissue>Bone marrow</tissue>
        <tissue>Kidney</tissue>
    </source>
</reference>
<reference key="2">
    <citation type="journal article" date="2009" name="PLoS Biol.">
        <title>Lineage-specific biology revealed by a finished genome assembly of the mouse.</title>
        <authorList>
            <person name="Church D.M."/>
            <person name="Goodstadt L."/>
            <person name="Hillier L.W."/>
            <person name="Zody M.C."/>
            <person name="Goldstein S."/>
            <person name="She X."/>
            <person name="Bult C.J."/>
            <person name="Agarwala R."/>
            <person name="Cherry J.L."/>
            <person name="DiCuccio M."/>
            <person name="Hlavina W."/>
            <person name="Kapustin Y."/>
            <person name="Meric P."/>
            <person name="Maglott D."/>
            <person name="Birtle Z."/>
            <person name="Marques A.C."/>
            <person name="Graves T."/>
            <person name="Zhou S."/>
            <person name="Teague B."/>
            <person name="Potamousis K."/>
            <person name="Churas C."/>
            <person name="Place M."/>
            <person name="Herschleb J."/>
            <person name="Runnheim R."/>
            <person name="Forrest D."/>
            <person name="Amos-Landgraf J."/>
            <person name="Schwartz D.C."/>
            <person name="Cheng Z."/>
            <person name="Lindblad-Toh K."/>
            <person name="Eichler E.E."/>
            <person name="Ponting C.P."/>
        </authorList>
    </citation>
    <scope>NUCLEOTIDE SEQUENCE [LARGE SCALE GENOMIC DNA]</scope>
    <source>
        <strain>C57BL/6J</strain>
    </source>
</reference>
<reference key="3">
    <citation type="journal article" date="2004" name="Genome Res.">
        <title>The status, quality, and expansion of the NIH full-length cDNA project: the Mammalian Gene Collection (MGC).</title>
        <authorList>
            <consortium name="The MGC Project Team"/>
        </authorList>
    </citation>
    <scope>NUCLEOTIDE SEQUENCE [LARGE SCALE MRNA] (ISOFORM 1)</scope>
    <source>
        <strain>C3H/He</strain>
        <strain>FVB/N</strain>
        <tissue>Mammary tumor</tissue>
        <tissue>Mesenchymal stem cell</tissue>
    </source>
</reference>
<reference key="4">
    <citation type="journal article" date="2010" name="Cell Host Microbe">
        <title>The ubiquitin ligase Riplet is essential for RIG-I-dependent innate immune responses to RNA virus infection.</title>
        <authorList>
            <person name="Oshiumi H."/>
            <person name="Miyashita M."/>
            <person name="Inoue N."/>
            <person name="Okabe M."/>
            <person name="Matsumoto M."/>
            <person name="Seya T."/>
        </authorList>
    </citation>
    <scope>FUNCTION</scope>
    <scope>PATHWAY</scope>
    <scope>TISSUE SPECIFICITY</scope>
    <scope>DISRUPTION PHENOTYPE</scope>
</reference>
<reference key="5">
    <citation type="journal article" date="2013" name="PLoS Pathog.">
        <title>A distinct role of Riplet-mediated K63-Linked polyubiquitination of the RIG-I repressor domain in human antiviral innate immune responses.</title>
        <authorList>
            <person name="Oshiumi H."/>
            <person name="Miyashita M."/>
            <person name="Matsumoto M."/>
            <person name="Seya T."/>
        </authorList>
    </citation>
    <scope>FUNCTION</scope>
</reference>
<reference key="6">
    <citation type="journal article" date="2017" name="Nat. Commun.">
        <title>Ube2D3 and Ube2N are essential for RIG-I-mediated MAVS aggregation in antiviral innate immunity.</title>
        <authorList>
            <person name="Shi Y."/>
            <person name="Yuan B."/>
            <person name="Zhu W."/>
            <person name="Zhang R."/>
            <person name="Li L."/>
            <person name="Hao X."/>
            <person name="Chen S."/>
            <person name="Hou F."/>
        </authorList>
    </citation>
    <scope>FUNCTION</scope>
    <scope>SUBCELLULAR LOCATION</scope>
</reference>
<reference key="7">
    <citation type="journal article" date="2019" name="Cell">
        <title>Ubiquitin-Dependent and -Independent Roles of E3 Ligase RIPLET in Innate Immunity.</title>
        <authorList>
            <person name="Cadena C."/>
            <person name="Ahmad S."/>
            <person name="Xavier A."/>
            <person name="Willemsen J."/>
            <person name="Park S."/>
            <person name="Park J.W."/>
            <person name="Oh S.W."/>
            <person name="Fujita T."/>
            <person name="Hou F."/>
            <person name="Binder M."/>
            <person name="Hur S."/>
        </authorList>
    </citation>
    <scope>FUNCTION</scope>
</reference>
<protein>
    <recommendedName>
        <fullName evidence="11">E3 ubiquitin-protein ligase RNF135</fullName>
        <ecNumber evidence="1">2.3.2.27</ecNumber>
    </recommendedName>
    <alternativeName>
        <fullName>RING finger protein 135</fullName>
    </alternativeName>
    <alternativeName>
        <fullName evidence="11">RING-type E3 ubiquitin transferase RNF135</fullName>
    </alternativeName>
</protein>
<accession>Q9CWS1</accession>
<accession>Q3UBK5</accession>
<accession>Q8R161</accession>
<accession>Q9DCH3</accession>
<feature type="chain" id="PRO_0000280558" description="E3 ubiquitin-protein ligase RNF135">
    <location>
        <begin position="1"/>
        <end position="417"/>
    </location>
</feature>
<feature type="domain" description="B30.2/SPRY" evidence="4">
    <location>
        <begin position="225"/>
        <end position="417"/>
    </location>
</feature>
<feature type="zinc finger region" description="RING-type" evidence="3">
    <location>
        <begin position="21"/>
        <end position="67"/>
    </location>
</feature>
<feature type="region of interest" description="Disordered" evidence="5">
    <location>
        <begin position="95"/>
        <end position="118"/>
    </location>
</feature>
<feature type="region of interest" description="Disordered" evidence="5">
    <location>
        <begin position="143"/>
        <end position="173"/>
    </location>
</feature>
<feature type="coiled-coil region" evidence="2">
    <location>
        <begin position="121"/>
        <end position="145"/>
    </location>
</feature>
<feature type="coiled-coil region" evidence="2">
    <location>
        <begin position="180"/>
        <end position="204"/>
    </location>
</feature>
<feature type="compositionally biased region" description="Polar residues" evidence="5">
    <location>
        <begin position="143"/>
        <end position="164"/>
    </location>
</feature>
<feature type="splice variant" id="VSP_023787" description="In isoform 2." evidence="10">
    <location>
        <begin position="78"/>
        <end position="346"/>
    </location>
</feature>
<sequence length="417" mass="46462">MAAVCSGNAVPVWLSEDDLSCIICQGLLDQPTTLPCGHSFCLRCLHDLWVSKRGAVDGCPWACPICRKGPLTKPKLHKNPLLQDLVDKYLQAAREVEAGSEPEPAPAPRSAPQVTVQKSTTNVIQELTDMVRQLVDDVKSLQTQRPNLGSGQDNAQGTPPTDSSSEGEHSLDSPKLVTFSISQKKIQEILHNLEEIQEKLQGSVPGRAPPRERVQEMTSSLCLLPDQRRPAPRKASHLSLWAISPTFDLRTLSYNLEVSNNSRRVTVSRGDLHTYHWSPQRFSISQVFCSQALSSGQKYWEVDTRNCSHWAIGVASWGMKRDGMLGRTMDSWCIEWRGPGQFSAWAKMKKTDLQSDLPEVVGVWLDLESGELAFYAVADHERLLYECEVSSSSPLHPAFWLYGLSPGNYLEIKQLNT</sequence>
<gene>
    <name evidence="12" type="primary">Rnf135</name>
</gene>
<comment type="function">
    <text evidence="1 6 7 8 9">E2-dependent E3 ubiquitin-protein ligase that functions as a RIGI coreceptor in the sensing of viral RNAs in cell cytoplasm and the activation of the antiviral innate immune response (PubMed:21147464, PubMed:23950712, PubMed:28469175, PubMed:31006531). Together with the UBE2D3, UBE2N and UB2V1 E2 ligases, catalyzes the 'Lys-63'-linked polyubiquitination of RIGI oligomerized on viral RNAs, an essential step in the activation of the RIG-I signaling pathway (PubMed:21147464, PubMed:28469175, PubMed:31006531). Through a ubiquitin-independent parallel mechanism, which consists in bridging RIGI filaments forming on longer viral RNAs, further activates the RIG-I signaling pathway (PubMed:31006531). This second mechanism that synergizes with the ubiquitin-dependent one would thereby allow an RNA length-dependent regulation of the RIG-I signaling pathway (PubMed:31006531). Associated with the E2 ligase UBE2N, also constitutively synthesizes unanchored 'Lys-63'-linked polyubiquitin chains that may also activate the RIG-I signaling pathway (By similarity). It is not involved in the innate immune response against DNA viruses (PubMed:21147464).</text>
</comment>
<comment type="catalytic activity">
    <reaction evidence="1">
        <text>S-ubiquitinyl-[E2 ubiquitin-conjugating enzyme]-L-cysteine + [acceptor protein]-L-lysine = [E2 ubiquitin-conjugating enzyme]-L-cysteine + N(6)-ubiquitinyl-[acceptor protein]-L-lysine.</text>
        <dbReference type="EC" id="2.3.2.27"/>
    </reaction>
</comment>
<comment type="pathway">
    <text evidence="6">Protein modification; protein ubiquitination.</text>
</comment>
<comment type="subunit">
    <text evidence="1">Homodimer. Interacts (homodimer) with RIGI (double-stranded RNA-bound oligomeric form); involved in both RIGI ubiquitination, oligomerization into filaments associated with viral RNAs and the bridging of these filaments. Interacts with UBE2D3 and UBE2N; E2 ubiquitin ligases involved in RNF135-mediated ubiquitination of RIGI and activation of the RIG-I signaling pathway. Interacts with PCBP2.</text>
</comment>
<comment type="subcellular location">
    <subcellularLocation>
        <location evidence="8">Cytoplasm</location>
    </subcellularLocation>
    <subcellularLocation>
        <location evidence="1">Cytoplasm</location>
        <location evidence="1">Stress granule</location>
    </subcellularLocation>
</comment>
<comment type="alternative products">
    <event type="alternative splicing"/>
    <isoform>
        <id>Q9CWS1-1</id>
        <name>1</name>
        <sequence type="displayed"/>
    </isoform>
    <isoform>
        <id>Q9CWS1-2</id>
        <name>2</name>
        <sequence type="described" ref="VSP_023787"/>
    </isoform>
</comment>
<comment type="tissue specificity">
    <text evidence="6">Ubiquitously expressed.</text>
</comment>
<comment type="domain">
    <text evidence="1">The B30.2/SPRY domain mediates the interaction with the substrate RIGI.</text>
</comment>
<comment type="domain">
    <text evidence="1">The coiled-coil domains mediate homodimerization and the bridging of viral RNA-associated RIGI filaments.</text>
</comment>
<comment type="disruption phenotype">
    <text evidence="6">Mice lacking Rnf135 develop and breed normally (PubMed:21147464). They are susceptible to RNA viruses infection (PubMed:21147464).</text>
</comment>
<keyword id="KW-0025">Alternative splicing</keyword>
<keyword id="KW-0175">Coiled coil</keyword>
<keyword id="KW-0963">Cytoplasm</keyword>
<keyword id="KW-0391">Immunity</keyword>
<keyword id="KW-0399">Innate immunity</keyword>
<keyword id="KW-0479">Metal-binding</keyword>
<keyword id="KW-0675">Receptor</keyword>
<keyword id="KW-1185">Reference proteome</keyword>
<keyword id="KW-0808">Transferase</keyword>
<keyword id="KW-0833">Ubl conjugation pathway</keyword>
<keyword id="KW-0862">Zinc</keyword>
<keyword id="KW-0863">Zinc-finger</keyword>
<dbReference type="EC" id="2.3.2.27" evidence="1"/>
<dbReference type="EMBL" id="AK002781">
    <property type="protein sequence ID" value="BAB22354.1"/>
    <property type="molecule type" value="mRNA"/>
</dbReference>
<dbReference type="EMBL" id="AK010429">
    <property type="protein sequence ID" value="BAB26931.1"/>
    <property type="molecule type" value="mRNA"/>
</dbReference>
<dbReference type="EMBL" id="AK150921">
    <property type="protein sequence ID" value="BAE29959.1"/>
    <property type="molecule type" value="mRNA"/>
</dbReference>
<dbReference type="EMBL" id="AK152096">
    <property type="protein sequence ID" value="BAE30944.1"/>
    <property type="molecule type" value="mRNA"/>
</dbReference>
<dbReference type="EMBL" id="AL591426">
    <property type="status" value="NOT_ANNOTATED_CDS"/>
    <property type="molecule type" value="Genomic_DNA"/>
</dbReference>
<dbReference type="EMBL" id="BC025209">
    <property type="protein sequence ID" value="AAH25209.1"/>
    <property type="molecule type" value="mRNA"/>
</dbReference>
<dbReference type="EMBL" id="BC096385">
    <property type="protein sequence ID" value="AAH96385.1"/>
    <property type="molecule type" value="mRNA"/>
</dbReference>
<dbReference type="EMBL" id="BC132307">
    <property type="protein sequence ID" value="AAI32308.1"/>
    <property type="molecule type" value="mRNA"/>
</dbReference>
<dbReference type="CCDS" id="CCDS25129.1">
    <molecule id="Q9CWS1-1"/>
</dbReference>
<dbReference type="RefSeq" id="NP_082295.1">
    <molecule id="Q9CWS1-1"/>
    <property type="nucleotide sequence ID" value="NM_028019.4"/>
</dbReference>
<dbReference type="SMR" id="Q9CWS1"/>
<dbReference type="BioGRID" id="215055">
    <property type="interactions" value="1"/>
</dbReference>
<dbReference type="FunCoup" id="Q9CWS1">
    <property type="interactions" value="26"/>
</dbReference>
<dbReference type="IntAct" id="Q9CWS1">
    <property type="interactions" value="1"/>
</dbReference>
<dbReference type="MINT" id="Q9CWS1"/>
<dbReference type="STRING" id="10090.ENSMUSP00000017839"/>
<dbReference type="iPTMnet" id="Q9CWS1"/>
<dbReference type="PhosphoSitePlus" id="Q9CWS1"/>
<dbReference type="jPOST" id="Q9CWS1"/>
<dbReference type="PaxDb" id="10090-ENSMUSP00000017839"/>
<dbReference type="PeptideAtlas" id="Q9CWS1"/>
<dbReference type="ProteomicsDB" id="299916">
    <molecule id="Q9CWS1-1"/>
</dbReference>
<dbReference type="ProteomicsDB" id="299917">
    <molecule id="Q9CWS1-2"/>
</dbReference>
<dbReference type="Pumba" id="Q9CWS1"/>
<dbReference type="DNASU" id="71956"/>
<dbReference type="Ensembl" id="ENSMUST00000017839.3">
    <molecule id="Q9CWS1-1"/>
    <property type="protein sequence ID" value="ENSMUSP00000017839.3"/>
    <property type="gene ID" value="ENSMUSG00000020707.7"/>
</dbReference>
<dbReference type="GeneID" id="71956"/>
<dbReference type="KEGG" id="mmu:71956"/>
<dbReference type="UCSC" id="uc007kln.1">
    <molecule id="Q9CWS1-1"/>
    <property type="organism name" value="mouse"/>
</dbReference>
<dbReference type="AGR" id="MGI:1919206"/>
<dbReference type="CTD" id="84282"/>
<dbReference type="MGI" id="MGI:1919206">
    <property type="gene designation" value="Rnf135"/>
</dbReference>
<dbReference type="VEuPathDB" id="HostDB:ENSMUSG00000020707"/>
<dbReference type="eggNOG" id="KOG2177">
    <property type="taxonomic scope" value="Eukaryota"/>
</dbReference>
<dbReference type="GeneTree" id="ENSGT00940000164538"/>
<dbReference type="HOGENOM" id="CLU_032372_2_0_1"/>
<dbReference type="InParanoid" id="Q9CWS1"/>
<dbReference type="OMA" id="RCSHWAV"/>
<dbReference type="OrthoDB" id="6270329at2759"/>
<dbReference type="PhylomeDB" id="Q9CWS1"/>
<dbReference type="TreeFam" id="TF351089"/>
<dbReference type="UniPathway" id="UPA00143"/>
<dbReference type="BioGRID-ORCS" id="71956">
    <property type="hits" value="3 hits in 78 CRISPR screens"/>
</dbReference>
<dbReference type="ChiTaRS" id="Rnf135">
    <property type="organism name" value="mouse"/>
</dbReference>
<dbReference type="PRO" id="PR:Q9CWS1"/>
<dbReference type="Proteomes" id="UP000000589">
    <property type="component" value="Chromosome 11"/>
</dbReference>
<dbReference type="RNAct" id="Q9CWS1">
    <property type="molecule type" value="protein"/>
</dbReference>
<dbReference type="Bgee" id="ENSMUSG00000020707">
    <property type="expression patterns" value="Expressed in proximal tubule and 240 other cell types or tissues"/>
</dbReference>
<dbReference type="ExpressionAtlas" id="Q9CWS1">
    <property type="expression patterns" value="baseline and differential"/>
</dbReference>
<dbReference type="GO" id="GO:0005737">
    <property type="term" value="C:cytoplasm"/>
    <property type="evidence" value="ECO:0000250"/>
    <property type="project" value="UniProtKB"/>
</dbReference>
<dbReference type="GO" id="GO:0010494">
    <property type="term" value="C:cytoplasmic stress granule"/>
    <property type="evidence" value="ECO:0000250"/>
    <property type="project" value="UniProtKB"/>
</dbReference>
<dbReference type="GO" id="GO:1990904">
    <property type="term" value="C:ribonucleoprotein complex"/>
    <property type="evidence" value="ECO:0000250"/>
    <property type="project" value="UniProtKB"/>
</dbReference>
<dbReference type="GO" id="GO:0043021">
    <property type="term" value="F:ribonucleoprotein complex binding"/>
    <property type="evidence" value="ECO:0000250"/>
    <property type="project" value="UniProtKB"/>
</dbReference>
<dbReference type="GO" id="GO:0039552">
    <property type="term" value="F:RIG-I binding"/>
    <property type="evidence" value="ECO:0000250"/>
    <property type="project" value="UniProtKB"/>
</dbReference>
<dbReference type="GO" id="GO:0061630">
    <property type="term" value="F:ubiquitin protein ligase activity"/>
    <property type="evidence" value="ECO:0000250"/>
    <property type="project" value="UniProtKB"/>
</dbReference>
<dbReference type="GO" id="GO:0004842">
    <property type="term" value="F:ubiquitin-protein transferase activity"/>
    <property type="evidence" value="ECO:0000250"/>
    <property type="project" value="UniProtKB"/>
</dbReference>
<dbReference type="GO" id="GO:0008270">
    <property type="term" value="F:zinc ion binding"/>
    <property type="evidence" value="ECO:0007669"/>
    <property type="project" value="UniProtKB-KW"/>
</dbReference>
<dbReference type="GO" id="GO:0140374">
    <property type="term" value="P:antiviral innate immune response"/>
    <property type="evidence" value="ECO:0000315"/>
    <property type="project" value="UniProtKB"/>
</dbReference>
<dbReference type="GO" id="GO:0010994">
    <property type="term" value="P:free ubiquitin chain polymerization"/>
    <property type="evidence" value="ECO:0000250"/>
    <property type="project" value="UniProtKB"/>
</dbReference>
<dbReference type="GO" id="GO:0032728">
    <property type="term" value="P:positive regulation of interferon-beta production"/>
    <property type="evidence" value="ECO:0000250"/>
    <property type="project" value="UniProtKB"/>
</dbReference>
<dbReference type="GO" id="GO:0051260">
    <property type="term" value="P:protein homooligomerization"/>
    <property type="evidence" value="ECO:0000250"/>
    <property type="project" value="UniProtKB"/>
</dbReference>
<dbReference type="GO" id="GO:0070534">
    <property type="term" value="P:protein K63-linked ubiquitination"/>
    <property type="evidence" value="ECO:0000250"/>
    <property type="project" value="UniProtKB"/>
</dbReference>
<dbReference type="GO" id="GO:0000209">
    <property type="term" value="P:protein polyubiquitination"/>
    <property type="evidence" value="ECO:0000316"/>
    <property type="project" value="UniProtKB"/>
</dbReference>
<dbReference type="GO" id="GO:0016567">
    <property type="term" value="P:protein ubiquitination"/>
    <property type="evidence" value="ECO:0000250"/>
    <property type="project" value="UniProtKB"/>
</dbReference>
<dbReference type="GO" id="GO:0045088">
    <property type="term" value="P:regulation of innate immune response"/>
    <property type="evidence" value="ECO:0000250"/>
    <property type="project" value="UniProtKB"/>
</dbReference>
<dbReference type="GO" id="GO:0039529">
    <property type="term" value="P:RIG-I signaling pathway"/>
    <property type="evidence" value="ECO:0000315"/>
    <property type="project" value="UniProtKB"/>
</dbReference>
<dbReference type="CDD" id="cd12902">
    <property type="entry name" value="SPRY_PRY_RNF135"/>
    <property type="match status" value="1"/>
</dbReference>
<dbReference type="FunFam" id="2.60.120.920:FF:000059">
    <property type="entry name" value="E3 ubiquitin-protein ligase RNF135"/>
    <property type="match status" value="1"/>
</dbReference>
<dbReference type="FunFam" id="3.30.40.10:FF:000545">
    <property type="entry name" value="E3 ubiquitin-protein ligase RNF135"/>
    <property type="match status" value="1"/>
</dbReference>
<dbReference type="Gene3D" id="2.60.120.920">
    <property type="match status" value="1"/>
</dbReference>
<dbReference type="Gene3D" id="3.30.40.10">
    <property type="entry name" value="Zinc/RING finger domain, C3HC4 (zinc finger)"/>
    <property type="match status" value="1"/>
</dbReference>
<dbReference type="InterPro" id="IPR001870">
    <property type="entry name" value="B30.2/SPRY"/>
</dbReference>
<dbReference type="InterPro" id="IPR043136">
    <property type="entry name" value="B30.2/SPRY_sf"/>
</dbReference>
<dbReference type="InterPro" id="IPR003879">
    <property type="entry name" value="Butyrophylin_SPRY"/>
</dbReference>
<dbReference type="InterPro" id="IPR013320">
    <property type="entry name" value="ConA-like_dom_sf"/>
</dbReference>
<dbReference type="InterPro" id="IPR051051">
    <property type="entry name" value="E3_ubiq-ligase_TRIM/RNF"/>
</dbReference>
<dbReference type="InterPro" id="IPR042723">
    <property type="entry name" value="RNF135_SPRY_PRY_dom"/>
</dbReference>
<dbReference type="InterPro" id="IPR003877">
    <property type="entry name" value="SPRY_dom"/>
</dbReference>
<dbReference type="InterPro" id="IPR001841">
    <property type="entry name" value="Znf_RING"/>
</dbReference>
<dbReference type="InterPro" id="IPR013083">
    <property type="entry name" value="Znf_RING/FYVE/PHD"/>
</dbReference>
<dbReference type="InterPro" id="IPR017907">
    <property type="entry name" value="Znf_RING_CS"/>
</dbReference>
<dbReference type="PANTHER" id="PTHR25465">
    <property type="entry name" value="B-BOX DOMAIN CONTAINING"/>
    <property type="match status" value="1"/>
</dbReference>
<dbReference type="PANTHER" id="PTHR25465:SF41">
    <property type="entry name" value="E3 UBIQUITIN-PROTEIN LIGASE RNF135"/>
    <property type="match status" value="1"/>
</dbReference>
<dbReference type="Pfam" id="PF00622">
    <property type="entry name" value="SPRY"/>
    <property type="match status" value="1"/>
</dbReference>
<dbReference type="Pfam" id="PF15227">
    <property type="entry name" value="zf-C3HC4_4"/>
    <property type="match status" value="1"/>
</dbReference>
<dbReference type="PRINTS" id="PR01407">
    <property type="entry name" value="BUTYPHLNCDUF"/>
</dbReference>
<dbReference type="SMART" id="SM00184">
    <property type="entry name" value="RING"/>
    <property type="match status" value="1"/>
</dbReference>
<dbReference type="SMART" id="SM00449">
    <property type="entry name" value="SPRY"/>
    <property type="match status" value="1"/>
</dbReference>
<dbReference type="SUPFAM" id="SSF49899">
    <property type="entry name" value="Concanavalin A-like lectins/glucanases"/>
    <property type="match status" value="1"/>
</dbReference>
<dbReference type="SUPFAM" id="SSF57850">
    <property type="entry name" value="RING/U-box"/>
    <property type="match status" value="1"/>
</dbReference>
<dbReference type="PROSITE" id="PS50188">
    <property type="entry name" value="B302_SPRY"/>
    <property type="match status" value="1"/>
</dbReference>
<dbReference type="PROSITE" id="PS00518">
    <property type="entry name" value="ZF_RING_1"/>
    <property type="match status" value="1"/>
</dbReference>
<dbReference type="PROSITE" id="PS50089">
    <property type="entry name" value="ZF_RING_2"/>
    <property type="match status" value="1"/>
</dbReference>
<proteinExistence type="evidence at transcript level"/>
<name>RN135_MOUSE</name>
<organism>
    <name type="scientific">Mus musculus</name>
    <name type="common">Mouse</name>
    <dbReference type="NCBI Taxonomy" id="10090"/>
    <lineage>
        <taxon>Eukaryota</taxon>
        <taxon>Metazoa</taxon>
        <taxon>Chordata</taxon>
        <taxon>Craniata</taxon>
        <taxon>Vertebrata</taxon>
        <taxon>Euteleostomi</taxon>
        <taxon>Mammalia</taxon>
        <taxon>Eutheria</taxon>
        <taxon>Euarchontoglires</taxon>
        <taxon>Glires</taxon>
        <taxon>Rodentia</taxon>
        <taxon>Myomorpha</taxon>
        <taxon>Muroidea</taxon>
        <taxon>Muridae</taxon>
        <taxon>Murinae</taxon>
        <taxon>Mus</taxon>
        <taxon>Mus</taxon>
    </lineage>
</organism>
<evidence type="ECO:0000250" key="1">
    <source>
        <dbReference type="UniProtKB" id="Q8IUD6"/>
    </source>
</evidence>
<evidence type="ECO:0000255" key="2"/>
<evidence type="ECO:0000255" key="3">
    <source>
        <dbReference type="PROSITE-ProRule" id="PRU00175"/>
    </source>
</evidence>
<evidence type="ECO:0000255" key="4">
    <source>
        <dbReference type="PROSITE-ProRule" id="PRU00548"/>
    </source>
</evidence>
<evidence type="ECO:0000256" key="5">
    <source>
        <dbReference type="SAM" id="MobiDB-lite"/>
    </source>
</evidence>
<evidence type="ECO:0000269" key="6">
    <source>
    </source>
</evidence>
<evidence type="ECO:0000269" key="7">
    <source>
    </source>
</evidence>
<evidence type="ECO:0000269" key="8">
    <source>
    </source>
</evidence>
<evidence type="ECO:0000269" key="9">
    <source>
    </source>
</evidence>
<evidence type="ECO:0000303" key="10">
    <source>
    </source>
</evidence>
<evidence type="ECO:0000305" key="11"/>
<evidence type="ECO:0000312" key="12">
    <source>
        <dbReference type="MGI" id="MGI:1919206"/>
    </source>
</evidence>